<dbReference type="EMBL" id="Z81112">
    <property type="protein sequence ID" value="CAB03275.1"/>
    <property type="molecule type" value="Genomic_DNA"/>
</dbReference>
<dbReference type="PIR" id="T24346">
    <property type="entry name" value="T24346"/>
</dbReference>
<dbReference type="RefSeq" id="NP_506505.1">
    <property type="nucleotide sequence ID" value="NM_074104.2"/>
</dbReference>
<dbReference type="SMR" id="P92015"/>
<dbReference type="FunCoup" id="P92015">
    <property type="interactions" value="5"/>
</dbReference>
<dbReference type="STRING" id="6239.T02B5.4.1"/>
<dbReference type="PaxDb" id="6239-T02B5.4"/>
<dbReference type="EnsemblMetazoa" id="T02B5.4.1">
    <property type="protein sequence ID" value="T02B5.4.1"/>
    <property type="gene ID" value="WBGene00005104"/>
</dbReference>
<dbReference type="GeneID" id="187979"/>
<dbReference type="KEGG" id="cel:CELE_T02B5.4"/>
<dbReference type="UCSC" id="T02B5.4">
    <property type="organism name" value="c. elegans"/>
</dbReference>
<dbReference type="AGR" id="WB:WBGene00005104"/>
<dbReference type="CTD" id="187979"/>
<dbReference type="WormBase" id="T02B5.4">
    <property type="protein sequence ID" value="CE16321"/>
    <property type="gene ID" value="WBGene00005104"/>
    <property type="gene designation" value="srd-26"/>
</dbReference>
<dbReference type="eggNOG" id="ENOG502TJS3">
    <property type="taxonomic scope" value="Eukaryota"/>
</dbReference>
<dbReference type="GeneTree" id="ENSGT00970000195825"/>
<dbReference type="HOGENOM" id="CLU_057924_3_1_1"/>
<dbReference type="InParanoid" id="P92015"/>
<dbReference type="OMA" id="CHLCHTI"/>
<dbReference type="OrthoDB" id="5888683at2759"/>
<dbReference type="PhylomeDB" id="P92015"/>
<dbReference type="PRO" id="PR:P92015"/>
<dbReference type="Proteomes" id="UP000001940">
    <property type="component" value="Chromosome V"/>
</dbReference>
<dbReference type="GO" id="GO:0016020">
    <property type="term" value="C:membrane"/>
    <property type="evidence" value="ECO:0007669"/>
    <property type="project" value="UniProtKB-SubCell"/>
</dbReference>
<dbReference type="InterPro" id="IPR019421">
    <property type="entry name" value="7TM_GPCR_serpentine_rcpt_Srd"/>
</dbReference>
<dbReference type="InterPro" id="IPR050920">
    <property type="entry name" value="Nematode_rcpt-like_delta"/>
</dbReference>
<dbReference type="PANTHER" id="PTHR22945:SF9">
    <property type="entry name" value="SERPENTINE RECEPTOR, CLASS D (DELTA)-RELATED"/>
    <property type="match status" value="1"/>
</dbReference>
<dbReference type="PANTHER" id="PTHR22945">
    <property type="entry name" value="SERPENTINE RECEPTOR, CLASS D DELTA"/>
    <property type="match status" value="1"/>
</dbReference>
<dbReference type="Pfam" id="PF10317">
    <property type="entry name" value="7TM_GPCR_Srd"/>
    <property type="match status" value="1"/>
</dbReference>
<dbReference type="SUPFAM" id="SSF81321">
    <property type="entry name" value="Family A G protein-coupled receptor-like"/>
    <property type="match status" value="1"/>
</dbReference>
<reference key="1">
    <citation type="journal article" date="1998" name="Science">
        <title>Genome sequence of the nematode C. elegans: a platform for investigating biology.</title>
        <authorList>
            <consortium name="The C. elegans sequencing consortium"/>
        </authorList>
    </citation>
    <scope>NUCLEOTIDE SEQUENCE [LARGE SCALE GENOMIC DNA]</scope>
    <source>
        <strain>Bristol N2</strain>
    </source>
</reference>
<comment type="subcellular location">
    <subcellularLocation>
        <location evidence="2">Membrane</location>
        <topology evidence="2">Multi-pass membrane protein</topology>
    </subcellularLocation>
</comment>
<comment type="similarity">
    <text evidence="2">Belongs to the nematode receptor-like protein srd family.</text>
</comment>
<proteinExistence type="inferred from homology"/>
<name>SRD26_CAEEL</name>
<organism>
    <name type="scientific">Caenorhabditis elegans</name>
    <dbReference type="NCBI Taxonomy" id="6239"/>
    <lineage>
        <taxon>Eukaryota</taxon>
        <taxon>Metazoa</taxon>
        <taxon>Ecdysozoa</taxon>
        <taxon>Nematoda</taxon>
        <taxon>Chromadorea</taxon>
        <taxon>Rhabditida</taxon>
        <taxon>Rhabditina</taxon>
        <taxon>Rhabditomorpha</taxon>
        <taxon>Rhabditoidea</taxon>
        <taxon>Rhabditidae</taxon>
        <taxon>Peloderinae</taxon>
        <taxon>Caenorhabditis</taxon>
    </lineage>
</organism>
<gene>
    <name type="primary">srd-26</name>
    <name type="ORF">T02B5.4</name>
</gene>
<evidence type="ECO:0000255" key="1"/>
<evidence type="ECO:0000305" key="2"/>
<accession>P92015</accession>
<feature type="chain" id="PRO_0000104515" description="Serpentine receptor class delta-26">
    <location>
        <begin position="1"/>
        <end position="317"/>
    </location>
</feature>
<feature type="transmembrane region" description="Helical" evidence="1">
    <location>
        <begin position="5"/>
        <end position="25"/>
    </location>
</feature>
<feature type="transmembrane region" description="Helical" evidence="1">
    <location>
        <begin position="38"/>
        <end position="58"/>
    </location>
</feature>
<feature type="transmembrane region" description="Helical" evidence="1">
    <location>
        <begin position="83"/>
        <end position="103"/>
    </location>
</feature>
<feature type="transmembrane region" description="Helical" evidence="1">
    <location>
        <begin position="122"/>
        <end position="142"/>
    </location>
</feature>
<feature type="transmembrane region" description="Helical" evidence="1">
    <location>
        <begin position="176"/>
        <end position="196"/>
    </location>
</feature>
<feature type="transmembrane region" description="Helical" evidence="1">
    <location>
        <begin position="227"/>
        <end position="247"/>
    </location>
</feature>
<feature type="transmembrane region" description="Helical" evidence="1">
    <location>
        <begin position="258"/>
        <end position="278"/>
    </location>
</feature>
<sequence>MLYQLLHTVLSVTGVTLNAFMMYLALTKSPKIMRPCSAIITIKTFTDILTSAMSFFVMQRIVTDGSSILVIPTGPCTRLGPTACYVGHMFMLCFLECNLIWMISSYIFRYYILYVRDPSIKSLVFVALCLSIPSFIHMAAWIRSYDPNEAFVVPDSFGLASSHLILGGHIVYRSTITLILQLFITSVLVLIAYAWIRNTLLSFAIKMGSDKNDVKNLNARLVKVINFQVFLPTFIFLGFFIFAAMFGRYITVNIAQYLVSIAFMFSPICSPFSYILFVPHYLNVITGNKKPAENRATDMCAVRAFKNPNVSVTMTNA</sequence>
<keyword id="KW-0472">Membrane</keyword>
<keyword id="KW-1185">Reference proteome</keyword>
<keyword id="KW-0812">Transmembrane</keyword>
<keyword id="KW-1133">Transmembrane helix</keyword>
<protein>
    <recommendedName>
        <fullName>Serpentine receptor class delta-26</fullName>
        <shortName>Protein srd-26</shortName>
    </recommendedName>
</protein>